<proteinExistence type="inferred from homology"/>
<evidence type="ECO:0000255" key="1">
    <source>
        <dbReference type="HAMAP-Rule" id="MF_01331"/>
    </source>
</evidence>
<evidence type="ECO:0000305" key="2"/>
<keyword id="KW-0687">Ribonucleoprotein</keyword>
<keyword id="KW-0689">Ribosomal protein</keyword>
<keyword id="KW-0694">RNA-binding</keyword>
<keyword id="KW-0699">rRNA-binding</keyword>
<protein>
    <recommendedName>
        <fullName evidence="1">Large ribosomal subunit protein uL22</fullName>
    </recommendedName>
    <alternativeName>
        <fullName evidence="2">50S ribosomal protein L22</fullName>
    </alternativeName>
</protein>
<gene>
    <name evidence="1" type="primary">rplV</name>
    <name type="ordered locus">EFER_3298</name>
</gene>
<accession>B7LRT1</accession>
<comment type="function">
    <text evidence="1">This protein binds specifically to 23S rRNA; its binding is stimulated by other ribosomal proteins, e.g. L4, L17, and L20. It is important during the early stages of 50S assembly. It makes multiple contacts with different domains of the 23S rRNA in the assembled 50S subunit and ribosome (By similarity).</text>
</comment>
<comment type="function">
    <text evidence="1">The globular domain of the protein is located near the polypeptide exit tunnel on the outside of the subunit, while an extended beta-hairpin is found that lines the wall of the exit tunnel in the center of the 70S ribosome.</text>
</comment>
<comment type="subunit">
    <text evidence="1">Part of the 50S ribosomal subunit.</text>
</comment>
<comment type="similarity">
    <text evidence="1">Belongs to the universal ribosomal protein uL22 family.</text>
</comment>
<feature type="chain" id="PRO_1000142263" description="Large ribosomal subunit protein uL22">
    <location>
        <begin position="1"/>
        <end position="110"/>
    </location>
</feature>
<sequence length="110" mass="12226">METIAKHRHARSSAQKVRLVADLIRGKKVSQALDILTYTNKKAAVLVKKVLESAIANAEHNDGADIDDLKVTKIFVDEGPSMKRIMPRAKGRADRILKRTSHITVVVSDR</sequence>
<reference key="1">
    <citation type="journal article" date="2009" name="PLoS Genet.">
        <title>Organised genome dynamics in the Escherichia coli species results in highly diverse adaptive paths.</title>
        <authorList>
            <person name="Touchon M."/>
            <person name="Hoede C."/>
            <person name="Tenaillon O."/>
            <person name="Barbe V."/>
            <person name="Baeriswyl S."/>
            <person name="Bidet P."/>
            <person name="Bingen E."/>
            <person name="Bonacorsi S."/>
            <person name="Bouchier C."/>
            <person name="Bouvet O."/>
            <person name="Calteau A."/>
            <person name="Chiapello H."/>
            <person name="Clermont O."/>
            <person name="Cruveiller S."/>
            <person name="Danchin A."/>
            <person name="Diard M."/>
            <person name="Dossat C."/>
            <person name="Karoui M.E."/>
            <person name="Frapy E."/>
            <person name="Garry L."/>
            <person name="Ghigo J.M."/>
            <person name="Gilles A.M."/>
            <person name="Johnson J."/>
            <person name="Le Bouguenec C."/>
            <person name="Lescat M."/>
            <person name="Mangenot S."/>
            <person name="Martinez-Jehanne V."/>
            <person name="Matic I."/>
            <person name="Nassif X."/>
            <person name="Oztas S."/>
            <person name="Petit M.A."/>
            <person name="Pichon C."/>
            <person name="Rouy Z."/>
            <person name="Ruf C.S."/>
            <person name="Schneider D."/>
            <person name="Tourret J."/>
            <person name="Vacherie B."/>
            <person name="Vallenet D."/>
            <person name="Medigue C."/>
            <person name="Rocha E.P.C."/>
            <person name="Denamur E."/>
        </authorList>
    </citation>
    <scope>NUCLEOTIDE SEQUENCE [LARGE SCALE GENOMIC DNA]</scope>
    <source>
        <strain>ATCC 35469 / DSM 13698 / BCRC 15582 / CCUG 18766 / IAM 14443 / JCM 21226 / LMG 7866 / NBRC 102419 / NCTC 12128 / CDC 0568-73</strain>
    </source>
</reference>
<name>RL22_ESCF3</name>
<organism>
    <name type="scientific">Escherichia fergusonii (strain ATCC 35469 / DSM 13698 / CCUG 18766 / IAM 14443 / JCM 21226 / LMG 7866 / NBRC 102419 / NCTC 12128 / CDC 0568-73)</name>
    <dbReference type="NCBI Taxonomy" id="585054"/>
    <lineage>
        <taxon>Bacteria</taxon>
        <taxon>Pseudomonadati</taxon>
        <taxon>Pseudomonadota</taxon>
        <taxon>Gammaproteobacteria</taxon>
        <taxon>Enterobacterales</taxon>
        <taxon>Enterobacteriaceae</taxon>
        <taxon>Escherichia</taxon>
    </lineage>
</organism>
<dbReference type="EMBL" id="CU928158">
    <property type="protein sequence ID" value="CAQ90778.1"/>
    <property type="molecule type" value="Genomic_DNA"/>
</dbReference>
<dbReference type="RefSeq" id="WP_000447529.1">
    <property type="nucleotide sequence ID" value="NC_011740.1"/>
</dbReference>
<dbReference type="SMR" id="B7LRT1"/>
<dbReference type="GeneID" id="93778672"/>
<dbReference type="KEGG" id="efe:EFER_3298"/>
<dbReference type="HOGENOM" id="CLU_083987_3_3_6"/>
<dbReference type="OrthoDB" id="9805969at2"/>
<dbReference type="Proteomes" id="UP000000745">
    <property type="component" value="Chromosome"/>
</dbReference>
<dbReference type="GO" id="GO:0022625">
    <property type="term" value="C:cytosolic large ribosomal subunit"/>
    <property type="evidence" value="ECO:0007669"/>
    <property type="project" value="TreeGrafter"/>
</dbReference>
<dbReference type="GO" id="GO:0019843">
    <property type="term" value="F:rRNA binding"/>
    <property type="evidence" value="ECO:0007669"/>
    <property type="project" value="UniProtKB-UniRule"/>
</dbReference>
<dbReference type="GO" id="GO:0003735">
    <property type="term" value="F:structural constituent of ribosome"/>
    <property type="evidence" value="ECO:0007669"/>
    <property type="project" value="InterPro"/>
</dbReference>
<dbReference type="GO" id="GO:0006412">
    <property type="term" value="P:translation"/>
    <property type="evidence" value="ECO:0007669"/>
    <property type="project" value="UniProtKB-UniRule"/>
</dbReference>
<dbReference type="CDD" id="cd00336">
    <property type="entry name" value="Ribosomal_L22"/>
    <property type="match status" value="1"/>
</dbReference>
<dbReference type="FunFam" id="3.90.470.10:FF:000001">
    <property type="entry name" value="50S ribosomal protein L22"/>
    <property type="match status" value="1"/>
</dbReference>
<dbReference type="Gene3D" id="3.90.470.10">
    <property type="entry name" value="Ribosomal protein L22/L17"/>
    <property type="match status" value="1"/>
</dbReference>
<dbReference type="HAMAP" id="MF_01331_B">
    <property type="entry name" value="Ribosomal_uL22_B"/>
    <property type="match status" value="1"/>
</dbReference>
<dbReference type="InterPro" id="IPR001063">
    <property type="entry name" value="Ribosomal_uL22"/>
</dbReference>
<dbReference type="InterPro" id="IPR005727">
    <property type="entry name" value="Ribosomal_uL22_bac/chlpt-type"/>
</dbReference>
<dbReference type="InterPro" id="IPR047867">
    <property type="entry name" value="Ribosomal_uL22_bac/org-type"/>
</dbReference>
<dbReference type="InterPro" id="IPR018260">
    <property type="entry name" value="Ribosomal_uL22_CS"/>
</dbReference>
<dbReference type="InterPro" id="IPR036394">
    <property type="entry name" value="Ribosomal_uL22_sf"/>
</dbReference>
<dbReference type="NCBIfam" id="TIGR01044">
    <property type="entry name" value="rplV_bact"/>
    <property type="match status" value="1"/>
</dbReference>
<dbReference type="PANTHER" id="PTHR13501">
    <property type="entry name" value="CHLOROPLAST 50S RIBOSOMAL PROTEIN L22-RELATED"/>
    <property type="match status" value="1"/>
</dbReference>
<dbReference type="PANTHER" id="PTHR13501:SF8">
    <property type="entry name" value="LARGE RIBOSOMAL SUBUNIT PROTEIN UL22M"/>
    <property type="match status" value="1"/>
</dbReference>
<dbReference type="Pfam" id="PF00237">
    <property type="entry name" value="Ribosomal_L22"/>
    <property type="match status" value="1"/>
</dbReference>
<dbReference type="SUPFAM" id="SSF54843">
    <property type="entry name" value="Ribosomal protein L22"/>
    <property type="match status" value="1"/>
</dbReference>
<dbReference type="PROSITE" id="PS00464">
    <property type="entry name" value="RIBOSOMAL_L22"/>
    <property type="match status" value="1"/>
</dbReference>